<feature type="chain" id="PRO_1000186535" description="Chorismate pyruvate-lyase">
    <location>
        <begin position="1"/>
        <end position="165"/>
    </location>
</feature>
<feature type="binding site" evidence="1">
    <location>
        <position position="35"/>
    </location>
    <ligand>
        <name>substrate</name>
    </ligand>
</feature>
<feature type="binding site" evidence="1">
    <location>
        <position position="77"/>
    </location>
    <ligand>
        <name>substrate</name>
    </ligand>
</feature>
<feature type="binding site" evidence="1">
    <location>
        <position position="115"/>
    </location>
    <ligand>
        <name>substrate</name>
    </ligand>
</feature>
<feature type="binding site" evidence="1">
    <location>
        <position position="156"/>
    </location>
    <ligand>
        <name>substrate</name>
    </ligand>
</feature>
<name>UBIC_SALHS</name>
<dbReference type="EC" id="4.1.3.40" evidence="1"/>
<dbReference type="EMBL" id="CP001120">
    <property type="protein sequence ID" value="ACF69946.1"/>
    <property type="molecule type" value="Genomic_DNA"/>
</dbReference>
<dbReference type="RefSeq" id="WP_000019230.1">
    <property type="nucleotide sequence ID" value="NC_011083.1"/>
</dbReference>
<dbReference type="SMR" id="B4TDL6"/>
<dbReference type="KEGG" id="seh:SeHA_C4575"/>
<dbReference type="HOGENOM" id="CLU_096824_1_0_6"/>
<dbReference type="UniPathway" id="UPA00232"/>
<dbReference type="Proteomes" id="UP000001866">
    <property type="component" value="Chromosome"/>
</dbReference>
<dbReference type="GO" id="GO:0005829">
    <property type="term" value="C:cytosol"/>
    <property type="evidence" value="ECO:0007669"/>
    <property type="project" value="TreeGrafter"/>
</dbReference>
<dbReference type="GO" id="GO:0008813">
    <property type="term" value="F:chorismate lyase activity"/>
    <property type="evidence" value="ECO:0007669"/>
    <property type="project" value="UniProtKB-UniRule"/>
</dbReference>
<dbReference type="GO" id="GO:0042866">
    <property type="term" value="P:pyruvate biosynthetic process"/>
    <property type="evidence" value="ECO:0007669"/>
    <property type="project" value="UniProtKB-UniRule"/>
</dbReference>
<dbReference type="GO" id="GO:0006744">
    <property type="term" value="P:ubiquinone biosynthetic process"/>
    <property type="evidence" value="ECO:0007669"/>
    <property type="project" value="UniProtKB-UniRule"/>
</dbReference>
<dbReference type="FunFam" id="3.40.1410.10:FF:000002">
    <property type="entry name" value="Chorismate pyruvate-lyase"/>
    <property type="match status" value="1"/>
</dbReference>
<dbReference type="Gene3D" id="3.40.1410.10">
    <property type="entry name" value="Chorismate lyase-like"/>
    <property type="match status" value="1"/>
</dbReference>
<dbReference type="HAMAP" id="MF_01632">
    <property type="entry name" value="UbiC"/>
    <property type="match status" value="1"/>
</dbReference>
<dbReference type="InterPro" id="IPR007440">
    <property type="entry name" value="Chorismate--pyruvate_lyase"/>
</dbReference>
<dbReference type="InterPro" id="IPR028978">
    <property type="entry name" value="Chorismate_lyase_/UTRA_dom_sf"/>
</dbReference>
<dbReference type="NCBIfam" id="NF008656">
    <property type="entry name" value="PRK11655.1"/>
    <property type="match status" value="1"/>
</dbReference>
<dbReference type="PANTHER" id="PTHR38683">
    <property type="entry name" value="CHORISMATE PYRUVATE-LYASE"/>
    <property type="match status" value="1"/>
</dbReference>
<dbReference type="PANTHER" id="PTHR38683:SF1">
    <property type="entry name" value="CHORISMATE PYRUVATE-LYASE"/>
    <property type="match status" value="1"/>
</dbReference>
<dbReference type="Pfam" id="PF04345">
    <property type="entry name" value="Chor_lyase"/>
    <property type="match status" value="1"/>
</dbReference>
<dbReference type="SUPFAM" id="SSF64288">
    <property type="entry name" value="Chorismate lyase-like"/>
    <property type="match status" value="1"/>
</dbReference>
<proteinExistence type="inferred from homology"/>
<comment type="function">
    <text evidence="1">Removes the pyruvyl group from chorismate, with concomitant aromatization of the ring, to provide 4-hydroxybenzoate (4HB) for the ubiquinone pathway.</text>
</comment>
<comment type="catalytic activity">
    <reaction evidence="1">
        <text>chorismate = 4-hydroxybenzoate + pyruvate</text>
        <dbReference type="Rhea" id="RHEA:16505"/>
        <dbReference type="ChEBI" id="CHEBI:15361"/>
        <dbReference type="ChEBI" id="CHEBI:17879"/>
        <dbReference type="ChEBI" id="CHEBI:29748"/>
        <dbReference type="EC" id="4.1.3.40"/>
    </reaction>
</comment>
<comment type="pathway">
    <text evidence="1">Cofactor biosynthesis; ubiquinone biosynthesis.</text>
</comment>
<comment type="subunit">
    <text evidence="1">Monomer.</text>
</comment>
<comment type="subcellular location">
    <subcellularLocation>
        <location evidence="1">Cytoplasm</location>
    </subcellularLocation>
</comment>
<comment type="similarity">
    <text evidence="1">Belongs to the UbiC family.</text>
</comment>
<evidence type="ECO:0000255" key="1">
    <source>
        <dbReference type="HAMAP-Rule" id="MF_01632"/>
    </source>
</evidence>
<reference key="1">
    <citation type="journal article" date="2011" name="J. Bacteriol.">
        <title>Comparative genomics of 28 Salmonella enterica isolates: evidence for CRISPR-mediated adaptive sublineage evolution.</title>
        <authorList>
            <person name="Fricke W.F."/>
            <person name="Mammel M.K."/>
            <person name="McDermott P.F."/>
            <person name="Tartera C."/>
            <person name="White D.G."/>
            <person name="Leclerc J.E."/>
            <person name="Ravel J."/>
            <person name="Cebula T.A."/>
        </authorList>
    </citation>
    <scope>NUCLEOTIDE SEQUENCE [LARGE SCALE GENOMIC DNA]</scope>
    <source>
        <strain>SL476</strain>
    </source>
</reference>
<accession>B4TDL6</accession>
<protein>
    <recommendedName>
        <fullName evidence="1">Chorismate pyruvate-lyase</fullName>
        <shortName evidence="1">CL</shortName>
        <shortName evidence="1">CPL</shortName>
        <ecNumber evidence="1">4.1.3.40</ecNumber>
    </recommendedName>
</protein>
<organism>
    <name type="scientific">Salmonella heidelberg (strain SL476)</name>
    <dbReference type="NCBI Taxonomy" id="454169"/>
    <lineage>
        <taxon>Bacteria</taxon>
        <taxon>Pseudomonadati</taxon>
        <taxon>Pseudomonadota</taxon>
        <taxon>Gammaproteobacteria</taxon>
        <taxon>Enterobacterales</taxon>
        <taxon>Enterobacteriaceae</taxon>
        <taxon>Salmonella</taxon>
    </lineage>
</organism>
<sequence length="165" mass="18748">MSHPALTRLRALRYFDAIPALEPHLLDWLLLEDSMTKRFEQQGKRVSVTLIREAFVGQSEVEEASGLLPSESRYWLREILLCADGEPWLAGRTVVPESTLCGPEQVLQHLGKTPLGRYLFTSSTLTRDFIEIGRDATLWGRRSRLRLSGKPLLLTELFLPASPLY</sequence>
<keyword id="KW-0963">Cytoplasm</keyword>
<keyword id="KW-0456">Lyase</keyword>
<keyword id="KW-0670">Pyruvate</keyword>
<keyword id="KW-0831">Ubiquinone biosynthesis</keyword>
<gene>
    <name evidence="1" type="primary">ubiC</name>
    <name type="ordered locus">SeHA_C4575</name>
</gene>